<proteinExistence type="evidence at protein level"/>
<protein>
    <recommendedName>
        <fullName>Transcriptional repressor CTCFL</fullName>
    </recommendedName>
    <alternativeName>
        <fullName>Brother of the regulator of imprinted sites</fullName>
    </alternativeName>
    <alternativeName>
        <fullName>CCCTC-binding factor</fullName>
    </alternativeName>
    <alternativeName>
        <fullName>CTCF paralog</fullName>
    </alternativeName>
    <alternativeName>
        <fullName>CTCF-like protein</fullName>
    </alternativeName>
    <alternativeName>
        <fullName>Cancer/testis antigen 27</fullName>
        <shortName>CT27</shortName>
    </alternativeName>
    <alternativeName>
        <fullName>Zinc finger protein CTCF-T</fullName>
    </alternativeName>
</protein>
<dbReference type="EMBL" id="AF336042">
    <property type="protein sequence ID" value="AAM28645.1"/>
    <property type="molecule type" value="mRNA"/>
</dbReference>
<dbReference type="EMBL" id="AY071919">
    <property type="protein sequence ID" value="AAL61541.1"/>
    <property type="molecule type" value="mRNA"/>
</dbReference>
<dbReference type="EMBL" id="DQ294738">
    <property type="protein sequence ID" value="ABB92839.1"/>
    <property type="molecule type" value="mRNA"/>
</dbReference>
<dbReference type="EMBL" id="DQ778124">
    <property type="protein sequence ID" value="ABH10106.1"/>
    <property type="molecule type" value="mRNA"/>
</dbReference>
<dbReference type="EMBL" id="DQ778108">
    <property type="protein sequence ID" value="ABH10090.1"/>
    <property type="molecule type" value="mRNA"/>
</dbReference>
<dbReference type="EMBL" id="DQ778109">
    <property type="protein sequence ID" value="ABH10091.1"/>
    <property type="molecule type" value="mRNA"/>
</dbReference>
<dbReference type="EMBL" id="DQ778110">
    <property type="protein sequence ID" value="ABH10092.1"/>
    <property type="molecule type" value="mRNA"/>
</dbReference>
<dbReference type="EMBL" id="DQ778111">
    <property type="protein sequence ID" value="ABH10093.1"/>
    <property type="molecule type" value="mRNA"/>
</dbReference>
<dbReference type="EMBL" id="DQ778112">
    <property type="protein sequence ID" value="ABH10094.1"/>
    <property type="molecule type" value="mRNA"/>
</dbReference>
<dbReference type="EMBL" id="DQ778115">
    <property type="protein sequence ID" value="ABH10097.1"/>
    <property type="molecule type" value="mRNA"/>
</dbReference>
<dbReference type="EMBL" id="DQ778116">
    <property type="protein sequence ID" value="ABH10098.1"/>
    <property type="molecule type" value="mRNA"/>
</dbReference>
<dbReference type="EMBL" id="DQ778121">
    <property type="protein sequence ID" value="ABH10103.2"/>
    <property type="molecule type" value="mRNA"/>
</dbReference>
<dbReference type="EMBL" id="DQ778123">
    <property type="protein sequence ID" value="ABH10105.1"/>
    <property type="molecule type" value="mRNA"/>
</dbReference>
<dbReference type="EMBL" id="DQ778125">
    <property type="protein sequence ID" value="ABH10107.2"/>
    <property type="molecule type" value="mRNA"/>
</dbReference>
<dbReference type="EMBL" id="DQ778126">
    <property type="protein sequence ID" value="ABH10108.1"/>
    <property type="molecule type" value="mRNA"/>
</dbReference>
<dbReference type="EMBL" id="DQ778127">
    <property type="protein sequence ID" value="ABH10109.1"/>
    <property type="molecule type" value="mRNA"/>
</dbReference>
<dbReference type="EMBL" id="AK128070">
    <property type="protein sequence ID" value="BAG54626.1"/>
    <property type="molecule type" value="mRNA"/>
</dbReference>
<dbReference type="EMBL" id="AL035541">
    <property type="status" value="NOT_ANNOTATED_CDS"/>
    <property type="molecule type" value="Genomic_DNA"/>
</dbReference>
<dbReference type="EMBL" id="AL160176">
    <property type="status" value="NOT_ANNOTATED_CDS"/>
    <property type="molecule type" value="Genomic_DNA"/>
</dbReference>
<dbReference type="EMBL" id="CH471077">
    <property type="protein sequence ID" value="EAW75518.1"/>
    <property type="molecule type" value="Genomic_DNA"/>
</dbReference>
<dbReference type="EMBL" id="BC130486">
    <property type="protein sequence ID" value="AAI30487.1"/>
    <property type="molecule type" value="mRNA"/>
</dbReference>
<dbReference type="CCDS" id="CCDS13459.1">
    <molecule id="Q8NI51-1"/>
</dbReference>
<dbReference type="CCDS" id="CCDS58776.1">
    <molecule id="Q8NI51-6"/>
</dbReference>
<dbReference type="CCDS" id="CCDS58777.1">
    <molecule id="Q8NI51-5"/>
</dbReference>
<dbReference type="CCDS" id="CCDS58778.1">
    <molecule id="Q8NI51-4"/>
</dbReference>
<dbReference type="CCDS" id="CCDS58779.1">
    <molecule id="Q8NI51-8"/>
</dbReference>
<dbReference type="CCDS" id="CCDS58780.1">
    <molecule id="Q8NI51-7"/>
</dbReference>
<dbReference type="CCDS" id="CCDS58781.1">
    <molecule id="Q8NI51-3"/>
</dbReference>
<dbReference type="CCDS" id="CCDS58782.1">
    <molecule id="Q8NI51-2"/>
</dbReference>
<dbReference type="CCDS" id="CCDS68161.1">
    <molecule id="Q8NI51-11"/>
</dbReference>
<dbReference type="CCDS" id="CCDS68162.1">
    <molecule id="Q8NI51-10"/>
</dbReference>
<dbReference type="RefSeq" id="NP_001255969.1">
    <molecule id="Q8NI51-1"/>
    <property type="nucleotide sequence ID" value="NM_001269040.2"/>
</dbReference>
<dbReference type="RefSeq" id="NP_001255970.1">
    <molecule id="Q8NI51-1"/>
    <property type="nucleotide sequence ID" value="NM_001269041.2"/>
</dbReference>
<dbReference type="RefSeq" id="NP_001255971.1">
    <property type="nucleotide sequence ID" value="NM_001269042.1"/>
</dbReference>
<dbReference type="RefSeq" id="NP_001255972.1">
    <molecule id="Q8NI51-7"/>
    <property type="nucleotide sequence ID" value="NM_001269043.2"/>
</dbReference>
<dbReference type="RefSeq" id="NP_001255973.1">
    <molecule id="Q8NI51-3"/>
    <property type="nucleotide sequence ID" value="NM_001269044.3"/>
</dbReference>
<dbReference type="RefSeq" id="NP_001255974.1">
    <property type="nucleotide sequence ID" value="NM_001269045.1"/>
</dbReference>
<dbReference type="RefSeq" id="NP_001255975.1">
    <molecule id="Q8NI51-8"/>
    <property type="nucleotide sequence ID" value="NM_001269046.2"/>
</dbReference>
<dbReference type="RefSeq" id="NP_001255976.1">
    <molecule id="Q8NI51-2"/>
    <property type="nucleotide sequence ID" value="NM_001269047.2"/>
</dbReference>
<dbReference type="RefSeq" id="NP_001255977.1">
    <molecule id="Q8NI51-4"/>
    <property type="nucleotide sequence ID" value="NM_001269048.3"/>
</dbReference>
<dbReference type="RefSeq" id="NP_001255978.1">
    <molecule id="Q8NI51-10"/>
    <property type="nucleotide sequence ID" value="NM_001269049.2"/>
</dbReference>
<dbReference type="RefSeq" id="NP_001255979.1">
    <molecule id="Q8NI51-5"/>
    <property type="nucleotide sequence ID" value="NM_001269050.3"/>
</dbReference>
<dbReference type="RefSeq" id="NP_001255980.1">
    <property type="nucleotide sequence ID" value="NM_001269051.1"/>
</dbReference>
<dbReference type="RefSeq" id="NP_001255981.1">
    <property type="nucleotide sequence ID" value="NM_001269052.1"/>
</dbReference>
<dbReference type="RefSeq" id="NP_001255983.1">
    <molecule id="Q8NI51-6"/>
    <property type="nucleotide sequence ID" value="NM_001269054.2"/>
</dbReference>
<dbReference type="RefSeq" id="NP_001255984.1">
    <molecule id="Q8NI51-11"/>
    <property type="nucleotide sequence ID" value="NM_001269055.3"/>
</dbReference>
<dbReference type="RefSeq" id="NP_001373922.1">
    <molecule id="Q8NI51-1"/>
    <property type="nucleotide sequence ID" value="NM_001386993.1"/>
</dbReference>
<dbReference type="RefSeq" id="NP_542185.2">
    <molecule id="Q8NI51-1"/>
    <property type="nucleotide sequence ID" value="NM_080618.3"/>
</dbReference>
<dbReference type="SMR" id="Q8NI51"/>
<dbReference type="BioGRID" id="126653">
    <property type="interactions" value="39"/>
</dbReference>
<dbReference type="FunCoup" id="Q8NI51">
    <property type="interactions" value="1914"/>
</dbReference>
<dbReference type="IntAct" id="Q8NI51">
    <property type="interactions" value="41"/>
</dbReference>
<dbReference type="STRING" id="9606.ENSP00000415579"/>
<dbReference type="iPTMnet" id="Q8NI51"/>
<dbReference type="PhosphoSitePlus" id="Q8NI51"/>
<dbReference type="BioMuta" id="CTCFL"/>
<dbReference type="DMDM" id="313104098"/>
<dbReference type="jPOST" id="Q8NI51"/>
<dbReference type="MassIVE" id="Q8NI51"/>
<dbReference type="PaxDb" id="9606-ENSP00000415579"/>
<dbReference type="PeptideAtlas" id="Q8NI51"/>
<dbReference type="ProteomicsDB" id="1764"/>
<dbReference type="ProteomicsDB" id="1765"/>
<dbReference type="ProteomicsDB" id="1766"/>
<dbReference type="ProteomicsDB" id="1767"/>
<dbReference type="ProteomicsDB" id="1768"/>
<dbReference type="ProteomicsDB" id="1769"/>
<dbReference type="ProteomicsDB" id="1770"/>
<dbReference type="ProteomicsDB" id="18412"/>
<dbReference type="ProteomicsDB" id="73832">
    <molecule id="Q8NI51-1"/>
</dbReference>
<dbReference type="Pumba" id="Q8NI51"/>
<dbReference type="Antibodypedia" id="744">
    <property type="antibodies" value="266 antibodies from 33 providers"/>
</dbReference>
<dbReference type="DNASU" id="140690"/>
<dbReference type="Ensembl" id="ENST00000243914.8">
    <molecule id="Q8NI51-1"/>
    <property type="protein sequence ID" value="ENSP00000243914.3"/>
    <property type="gene ID" value="ENSG00000124092.13"/>
</dbReference>
<dbReference type="Ensembl" id="ENST00000371196.6">
    <molecule id="Q8NI51-1"/>
    <property type="protein sequence ID" value="ENSP00000360239.2"/>
    <property type="gene ID" value="ENSG00000124092.13"/>
</dbReference>
<dbReference type="Ensembl" id="ENST00000422109.6">
    <molecule id="Q8NI51-9"/>
    <property type="protein sequence ID" value="ENSP00000413713.2"/>
    <property type="gene ID" value="ENSG00000124092.13"/>
</dbReference>
<dbReference type="Ensembl" id="ENST00000422869.6">
    <molecule id="Q8NI51-2"/>
    <property type="protein sequence ID" value="ENSP00000399061.2"/>
    <property type="gene ID" value="ENSG00000124092.13"/>
</dbReference>
<dbReference type="Ensembl" id="ENST00000423479.7">
    <molecule id="Q8NI51-7"/>
    <property type="protein sequence ID" value="ENSP00000415579.2"/>
    <property type="gene ID" value="ENSG00000124092.13"/>
</dbReference>
<dbReference type="Ensembl" id="ENST00000429804.7">
    <molecule id="Q8NI51-8"/>
    <property type="protein sequence ID" value="ENSP00000415329.2"/>
    <property type="gene ID" value="ENSG00000124092.13"/>
</dbReference>
<dbReference type="Ensembl" id="ENST00000432255.6">
    <molecule id="Q8NI51-4"/>
    <property type="protein sequence ID" value="ENSP00000409344.2"/>
    <property type="gene ID" value="ENSG00000124092.13"/>
</dbReference>
<dbReference type="Ensembl" id="ENST00000433949.7">
    <molecule id="Q8NI51-10"/>
    <property type="protein sequence ID" value="ENSP00000392034.3"/>
    <property type="gene ID" value="ENSG00000124092.13"/>
</dbReference>
<dbReference type="Ensembl" id="ENST00000502686.6">
    <molecule id="Q8NI51-6"/>
    <property type="protein sequence ID" value="ENSP00000437999.1"/>
    <property type="gene ID" value="ENSG00000124092.13"/>
</dbReference>
<dbReference type="Ensembl" id="ENST00000539382.5">
    <molecule id="Q8NI51-5"/>
    <property type="protein sequence ID" value="ENSP00000439998.1"/>
    <property type="gene ID" value="ENSG00000124092.13"/>
</dbReference>
<dbReference type="Ensembl" id="ENST00000608263.5">
    <molecule id="Q8NI51-1"/>
    <property type="protein sequence ID" value="ENSP00000476783.1"/>
    <property type="gene ID" value="ENSG00000124092.13"/>
</dbReference>
<dbReference type="Ensembl" id="ENST00000608440.5">
    <molecule id="Q8NI51-3"/>
    <property type="protein sequence ID" value="ENSP00000477488.1"/>
    <property type="gene ID" value="ENSG00000124092.13"/>
</dbReference>
<dbReference type="Ensembl" id="ENST00000608903.5">
    <molecule id="Q8NI51-11"/>
    <property type="protein sequence ID" value="ENSP00000476718.1"/>
    <property type="gene ID" value="ENSG00000124092.13"/>
</dbReference>
<dbReference type="Ensembl" id="ENST00000609232.5">
    <molecule id="Q8NI51-1"/>
    <property type="protein sequence ID" value="ENSP00000476398.1"/>
    <property type="gene ID" value="ENSG00000124092.13"/>
</dbReference>
<dbReference type="GeneID" id="140690"/>
<dbReference type="KEGG" id="hsa:140690"/>
<dbReference type="MANE-Select" id="ENST00000243914.8">
    <property type="protein sequence ID" value="ENSP00000243914.3"/>
    <property type="RefSeq nucleotide sequence ID" value="NM_001386993.1"/>
    <property type="RefSeq protein sequence ID" value="NP_001373922.1"/>
</dbReference>
<dbReference type="UCSC" id="uc010giw.2">
    <molecule id="Q8NI51-1"/>
    <property type="organism name" value="human"/>
</dbReference>
<dbReference type="AGR" id="HGNC:16234"/>
<dbReference type="CTD" id="140690"/>
<dbReference type="DisGeNET" id="140690"/>
<dbReference type="GeneCards" id="CTCFL"/>
<dbReference type="HGNC" id="HGNC:16234">
    <property type="gene designation" value="CTCFL"/>
</dbReference>
<dbReference type="HPA" id="ENSG00000124092">
    <property type="expression patterns" value="Tissue enriched (testis)"/>
</dbReference>
<dbReference type="MIM" id="607022">
    <property type="type" value="gene"/>
</dbReference>
<dbReference type="neXtProt" id="NX_Q8NI51"/>
<dbReference type="OpenTargets" id="ENSG00000124092"/>
<dbReference type="PharmGKB" id="PA26999"/>
<dbReference type="VEuPathDB" id="HostDB:ENSG00000124092"/>
<dbReference type="eggNOG" id="KOG1721">
    <property type="taxonomic scope" value="Eukaryota"/>
</dbReference>
<dbReference type="GeneTree" id="ENSGT00940000161524"/>
<dbReference type="HOGENOM" id="CLU_643978_0_0_1"/>
<dbReference type="InParanoid" id="Q8NI51"/>
<dbReference type="OrthoDB" id="6077919at2759"/>
<dbReference type="PAN-GO" id="Q8NI51">
    <property type="GO annotations" value="7 GO annotations based on evolutionary models"/>
</dbReference>
<dbReference type="PhylomeDB" id="Q8NI51"/>
<dbReference type="TreeFam" id="TF106430"/>
<dbReference type="PathwayCommons" id="Q8NI51"/>
<dbReference type="SignaLink" id="Q8NI51"/>
<dbReference type="SIGNOR" id="Q8NI51"/>
<dbReference type="BioGRID-ORCS" id="140690">
    <property type="hits" value="11 hits in 1180 CRISPR screens"/>
</dbReference>
<dbReference type="CD-CODE" id="8C2F96ED">
    <property type="entry name" value="Centrosome"/>
</dbReference>
<dbReference type="ChiTaRS" id="CTCFL">
    <property type="organism name" value="human"/>
</dbReference>
<dbReference type="GeneWiki" id="CTCFL"/>
<dbReference type="GenomeRNAi" id="140690"/>
<dbReference type="Pharos" id="Q8NI51">
    <property type="development level" value="Tbio"/>
</dbReference>
<dbReference type="PRO" id="PR:Q8NI51"/>
<dbReference type="Proteomes" id="UP000005640">
    <property type="component" value="Chromosome 20"/>
</dbReference>
<dbReference type="RNAct" id="Q8NI51">
    <property type="molecule type" value="protein"/>
</dbReference>
<dbReference type="Bgee" id="ENSG00000124092">
    <property type="expression patterns" value="Expressed in secondary oocyte and 57 other cell types or tissues"/>
</dbReference>
<dbReference type="ExpressionAtlas" id="Q8NI51">
    <property type="expression patterns" value="baseline and differential"/>
</dbReference>
<dbReference type="GO" id="GO:0005694">
    <property type="term" value="C:chromosome"/>
    <property type="evidence" value="ECO:0000318"/>
    <property type="project" value="GO_Central"/>
</dbReference>
<dbReference type="GO" id="GO:0005829">
    <property type="term" value="C:cytosol"/>
    <property type="evidence" value="ECO:0000314"/>
    <property type="project" value="HPA"/>
</dbReference>
<dbReference type="GO" id="GO:0016604">
    <property type="term" value="C:nuclear body"/>
    <property type="evidence" value="ECO:0000314"/>
    <property type="project" value="HPA"/>
</dbReference>
<dbReference type="GO" id="GO:0005654">
    <property type="term" value="C:nucleoplasm"/>
    <property type="evidence" value="ECO:0000314"/>
    <property type="project" value="HPA"/>
</dbReference>
<dbReference type="GO" id="GO:0005634">
    <property type="term" value="C:nucleus"/>
    <property type="evidence" value="ECO:0000250"/>
    <property type="project" value="UniProtKB"/>
</dbReference>
<dbReference type="GO" id="GO:0043035">
    <property type="term" value="F:chromatin insulator sequence binding"/>
    <property type="evidence" value="ECO:0000318"/>
    <property type="project" value="GO_Central"/>
</dbReference>
<dbReference type="GO" id="GO:0003677">
    <property type="term" value="F:DNA binding"/>
    <property type="evidence" value="ECO:0000314"/>
    <property type="project" value="UniProtKB"/>
</dbReference>
<dbReference type="GO" id="GO:0001228">
    <property type="term" value="F:DNA-binding transcription activator activity, RNA polymerase II-specific"/>
    <property type="evidence" value="ECO:0000314"/>
    <property type="project" value="NTNU_SB"/>
</dbReference>
<dbReference type="GO" id="GO:0042393">
    <property type="term" value="F:histone binding"/>
    <property type="evidence" value="ECO:0000250"/>
    <property type="project" value="UniProtKB"/>
</dbReference>
<dbReference type="GO" id="GO:0000978">
    <property type="term" value="F:RNA polymerase II cis-regulatory region sequence-specific DNA binding"/>
    <property type="evidence" value="ECO:0000314"/>
    <property type="project" value="NTNU_SB"/>
</dbReference>
<dbReference type="GO" id="GO:0043565">
    <property type="term" value="F:sequence-specific DNA binding"/>
    <property type="evidence" value="ECO:0000314"/>
    <property type="project" value="UniProtKB"/>
</dbReference>
<dbReference type="GO" id="GO:0000976">
    <property type="term" value="F:transcription cis-regulatory region binding"/>
    <property type="evidence" value="ECO:0000314"/>
    <property type="project" value="UniProtKB"/>
</dbReference>
<dbReference type="GO" id="GO:0008270">
    <property type="term" value="F:zinc ion binding"/>
    <property type="evidence" value="ECO:0007669"/>
    <property type="project" value="UniProtKB-KW"/>
</dbReference>
<dbReference type="GO" id="GO:0071169">
    <property type="term" value="P:establishment of protein localization to chromatin"/>
    <property type="evidence" value="ECO:0000315"/>
    <property type="project" value="UniProtKB"/>
</dbReference>
<dbReference type="GO" id="GO:0071514">
    <property type="term" value="P:genomic imprinting"/>
    <property type="evidence" value="ECO:0000250"/>
    <property type="project" value="UniProtKB"/>
</dbReference>
<dbReference type="GO" id="GO:0045893">
    <property type="term" value="P:positive regulation of DNA-templated transcription"/>
    <property type="evidence" value="ECO:0000314"/>
    <property type="project" value="UniProtKB"/>
</dbReference>
<dbReference type="GO" id="GO:0010628">
    <property type="term" value="P:positive regulation of gene expression"/>
    <property type="evidence" value="ECO:0000314"/>
    <property type="project" value="UniProtKB"/>
</dbReference>
<dbReference type="GO" id="GO:0045944">
    <property type="term" value="P:positive regulation of transcription by RNA polymerase II"/>
    <property type="evidence" value="ECO:0000314"/>
    <property type="project" value="NTNU_SB"/>
</dbReference>
<dbReference type="GO" id="GO:0006357">
    <property type="term" value="P:regulation of transcription by RNA polymerase II"/>
    <property type="evidence" value="ECO:0000318"/>
    <property type="project" value="GO_Central"/>
</dbReference>
<dbReference type="GO" id="GO:0045815">
    <property type="term" value="P:transcription initiation-coupled chromatin remodeling"/>
    <property type="evidence" value="ECO:0000315"/>
    <property type="project" value="UniProtKB"/>
</dbReference>
<dbReference type="FunFam" id="3.30.160.60:FF:000901">
    <property type="entry name" value="CCCTC-binding factor like"/>
    <property type="match status" value="1"/>
</dbReference>
<dbReference type="FunFam" id="3.30.160.60:FF:000222">
    <property type="entry name" value="Putative transcriptional repressor ctcf"/>
    <property type="match status" value="1"/>
</dbReference>
<dbReference type="FunFam" id="3.30.160.60:FF:000283">
    <property type="entry name" value="Putative transcriptional repressor ctcf"/>
    <property type="match status" value="1"/>
</dbReference>
<dbReference type="FunFam" id="3.30.160.60:FF:000373">
    <property type="entry name" value="Putative transcriptional repressor ctcf"/>
    <property type="match status" value="1"/>
</dbReference>
<dbReference type="FunFam" id="3.30.160.60:FF:000420">
    <property type="entry name" value="Putative transcriptional repressor ctcf"/>
    <property type="match status" value="1"/>
</dbReference>
<dbReference type="FunFam" id="3.30.160.60:FF:000049">
    <property type="entry name" value="transcriptional repressor CTCF isoform X1"/>
    <property type="match status" value="2"/>
</dbReference>
<dbReference type="Gene3D" id="3.30.160.60">
    <property type="entry name" value="Classic Zinc Finger"/>
    <property type="match status" value="9"/>
</dbReference>
<dbReference type="InterPro" id="IPR036236">
    <property type="entry name" value="Znf_C2H2_sf"/>
</dbReference>
<dbReference type="InterPro" id="IPR013087">
    <property type="entry name" value="Znf_C2H2_type"/>
</dbReference>
<dbReference type="PANTHER" id="PTHR24379:SF81">
    <property type="entry name" value="CCCTC-BINDING FACTOR LIKE"/>
    <property type="match status" value="1"/>
</dbReference>
<dbReference type="PANTHER" id="PTHR24379">
    <property type="entry name" value="KRAB AND ZINC FINGER DOMAIN-CONTAINING"/>
    <property type="match status" value="1"/>
</dbReference>
<dbReference type="Pfam" id="PF00096">
    <property type="entry name" value="zf-C2H2"/>
    <property type="match status" value="4"/>
</dbReference>
<dbReference type="SMART" id="SM00355">
    <property type="entry name" value="ZnF_C2H2"/>
    <property type="match status" value="11"/>
</dbReference>
<dbReference type="SUPFAM" id="SSF57667">
    <property type="entry name" value="beta-beta-alpha zinc fingers"/>
    <property type="match status" value="7"/>
</dbReference>
<dbReference type="PROSITE" id="PS00028">
    <property type="entry name" value="ZINC_FINGER_C2H2_1"/>
    <property type="match status" value="7"/>
</dbReference>
<dbReference type="PROSITE" id="PS50157">
    <property type="entry name" value="ZINC_FINGER_C2H2_2"/>
    <property type="match status" value="11"/>
</dbReference>
<sequence length="663" mass="75747">MAATEISVLSEQFTKIKELELMPEKGLKEEEKDGVCREKDHRSPSELEAERTSGAFQDSVLEEEVELVLAPSEESEKYILTLQTVHFTSEAVELQDMSLLSIQQQEGVQVVVQQPGPGLLWLEEGPRQSLQQCVAISIQQELYSPQEMEVLQFHALEENVMVASEDSKLAVSLAETTGLIKLEEEQEKNQLLAERTKEQLFFVETMSGDERSDEIVLTVSNSNVEEQEDQPTAGQADAEKAKSTKNQRKTKGAKGTFHCDVCMFTSSRMSSFNRHMKTHTSEKPHLCHLCLKTFRTVTLLRNHVNTHTGTRPYKCNDCNMAFVTSGELVRHRRYKHTHEKPFKCSMCKYASVEASKLKRHVRSHTGERPFQCCQCSYASRDTYKLKRHMRTHSGEKPYECHICHTRFTQSGTMKIHILQKHGENVPKYQCPHCATIIARKSDLRVHMRNLHAYSAAELKCRYCSAVFHERYALIQHQKTHKNEKRFKCKHCSYACKQERHMTAHIRTHTGEKPFTCLSCNKCFRQKQLLNAHFRKYHDANFIPTVYKCSKCGKGFSRWINLHRHSEKCGSGEAKSAASGKGRRTRKRKQTILKEATKGQKEAAKGWKEAANGDEAAAEEASTTKGEQFPGEMFPVACRETTARVKEEVDEGVTCEMLLNTMDK</sequence>
<accession>Q8NI51</accession>
<accession>A0S6W1</accession>
<accession>A1L4C6</accession>
<accession>A6XGL8</accession>
<accession>A6XGM2</accession>
<accession>A6XGM3</accession>
<accession>A6XGM8</accession>
<accession>A6XGN0</accession>
<accession>A6XGN1</accession>
<accession>A6XGN2</accession>
<accession>A6XGN3</accession>
<accession>A6XGN4</accession>
<accession>E7EQ27</accession>
<accession>E7EUE3</accession>
<accession>E9PBA9</accession>
<accession>Q5JUG4</accession>
<accession>Q9BZ30</accession>
<accession>Q9NQJ3</accession>
<evidence type="ECO:0000250" key="1"/>
<evidence type="ECO:0000255" key="2">
    <source>
        <dbReference type="PROSITE-ProRule" id="PRU00042"/>
    </source>
</evidence>
<evidence type="ECO:0000256" key="3">
    <source>
        <dbReference type="SAM" id="MobiDB-lite"/>
    </source>
</evidence>
<evidence type="ECO:0000269" key="4">
    <source>
    </source>
</evidence>
<evidence type="ECO:0000269" key="5">
    <source>
    </source>
</evidence>
<evidence type="ECO:0000269" key="6">
    <source>
    </source>
</evidence>
<evidence type="ECO:0000269" key="7">
    <source>
    </source>
</evidence>
<evidence type="ECO:0000269" key="8">
    <source>
    </source>
</evidence>
<evidence type="ECO:0000269" key="9">
    <source>
    </source>
</evidence>
<evidence type="ECO:0000303" key="10">
    <source>
    </source>
</evidence>
<evidence type="ECO:0000305" key="11"/>
<reference key="1">
    <citation type="journal article" date="2002" name="Proc. Natl. Acad. Sci. U.S.A.">
        <title>BORIS, a novel male germ-line-specific protein associated with epigenetic reprogramming events, shares the same 11-zinc-finger domain with CTCF, the insulator protein involved in reading imprinting marks in the soma.</title>
        <authorList>
            <person name="Loukinov D.I."/>
            <person name="Pugacheva E."/>
            <person name="Vatolin S."/>
            <person name="Pack S.D."/>
            <person name="Moon H."/>
            <person name="Chernukhin I."/>
            <person name="Mannan P."/>
            <person name="Larsson E."/>
            <person name="Kanduri C."/>
            <person name="Vostrov A.A."/>
            <person name="Cui H."/>
            <person name="Niemitz E.L."/>
            <person name="Rasko J.E.J."/>
            <person name="Docquier F.M."/>
            <person name="Kistler M."/>
            <person name="Breen J.J."/>
            <person name="Zhuang Z."/>
            <person name="Quitschke W.W."/>
            <person name="Renkawitz R."/>
            <person name="Klenova E.M."/>
            <person name="Feinberg A.P."/>
            <person name="Ohlsson R."/>
            <person name="Morse H.C. III"/>
            <person name="Lobanenkov V.V."/>
        </authorList>
    </citation>
    <scope>NUCLEOTIDE SEQUENCE [MRNA] (ISOFORMS 1; 2; 3; 4; 5; 6; 7; 8; 9; 10 AND 11)</scope>
    <scope>FUNCTION</scope>
    <scope>VARIANT ALA-177</scope>
    <source>
        <tissue>Testis</tissue>
    </source>
</reference>
<reference key="2">
    <citation type="journal article" date="2006" name="PLoS Biol.">
        <title>The testis-specific factor CTCFL cooperates with the protein methyltransferase PRMT7 in H19 imprinting control region methylation.</title>
        <authorList>
            <person name="Jelinic P."/>
            <person name="Stehle J.-C."/>
            <person name="Shaw P."/>
        </authorList>
    </citation>
    <scope>NUCLEOTIDE SEQUENCE [MRNA] (ISOFORM 1)</scope>
    <source>
        <tissue>Testis</tissue>
    </source>
</reference>
<reference key="3">
    <citation type="journal article" date="2007" name="Nucleic Acids Res.">
        <title>Expression of the CTCF-paralogous cancer-testis gene, brother of the regulator of imprinted sites (BORIS), is regulated by three alternative promoters modulated by CpG methylation and by CTCF and p53 transcription factors.</title>
        <authorList>
            <person name="Renaud S."/>
            <person name="Pugacheva E.M."/>
            <person name="Delgado M.D."/>
            <person name="Braunschweig R."/>
            <person name="Abdullaev Z."/>
            <person name="Loukinov D."/>
            <person name="Benhattar J."/>
            <person name="Lobanenkov V."/>
        </authorList>
    </citation>
    <scope>NUCLEOTIDE SEQUENCE [MRNA] (ISOFORM 1)</scope>
    <scope>VARIANT ALA-177</scope>
    <source>
        <tissue>Testis</tissue>
    </source>
</reference>
<reference key="4">
    <citation type="journal article" date="2004" name="Nat. Genet.">
        <title>Complete sequencing and characterization of 21,243 full-length human cDNAs.</title>
        <authorList>
            <person name="Ota T."/>
            <person name="Suzuki Y."/>
            <person name="Nishikawa T."/>
            <person name="Otsuki T."/>
            <person name="Sugiyama T."/>
            <person name="Irie R."/>
            <person name="Wakamatsu A."/>
            <person name="Hayashi K."/>
            <person name="Sato H."/>
            <person name="Nagai K."/>
            <person name="Kimura K."/>
            <person name="Makita H."/>
            <person name="Sekine M."/>
            <person name="Obayashi M."/>
            <person name="Nishi T."/>
            <person name="Shibahara T."/>
            <person name="Tanaka T."/>
            <person name="Ishii S."/>
            <person name="Yamamoto J."/>
            <person name="Saito K."/>
            <person name="Kawai Y."/>
            <person name="Isono Y."/>
            <person name="Nakamura Y."/>
            <person name="Nagahari K."/>
            <person name="Murakami K."/>
            <person name="Yasuda T."/>
            <person name="Iwayanagi T."/>
            <person name="Wagatsuma M."/>
            <person name="Shiratori A."/>
            <person name="Sudo H."/>
            <person name="Hosoiri T."/>
            <person name="Kaku Y."/>
            <person name="Kodaira H."/>
            <person name="Kondo H."/>
            <person name="Sugawara M."/>
            <person name="Takahashi M."/>
            <person name="Kanda K."/>
            <person name="Yokoi T."/>
            <person name="Furuya T."/>
            <person name="Kikkawa E."/>
            <person name="Omura Y."/>
            <person name="Abe K."/>
            <person name="Kamihara K."/>
            <person name="Katsuta N."/>
            <person name="Sato K."/>
            <person name="Tanikawa M."/>
            <person name="Yamazaki M."/>
            <person name="Ninomiya K."/>
            <person name="Ishibashi T."/>
            <person name="Yamashita H."/>
            <person name="Murakawa K."/>
            <person name="Fujimori K."/>
            <person name="Tanai H."/>
            <person name="Kimata M."/>
            <person name="Watanabe M."/>
            <person name="Hiraoka S."/>
            <person name="Chiba Y."/>
            <person name="Ishida S."/>
            <person name="Ono Y."/>
            <person name="Takiguchi S."/>
            <person name="Watanabe S."/>
            <person name="Yosida M."/>
            <person name="Hotuta T."/>
            <person name="Kusano J."/>
            <person name="Kanehori K."/>
            <person name="Takahashi-Fujii A."/>
            <person name="Hara H."/>
            <person name="Tanase T.-O."/>
            <person name="Nomura Y."/>
            <person name="Togiya S."/>
            <person name="Komai F."/>
            <person name="Hara R."/>
            <person name="Takeuchi K."/>
            <person name="Arita M."/>
            <person name="Imose N."/>
            <person name="Musashino K."/>
            <person name="Yuuki H."/>
            <person name="Oshima A."/>
            <person name="Sasaki N."/>
            <person name="Aotsuka S."/>
            <person name="Yoshikawa Y."/>
            <person name="Matsunawa H."/>
            <person name="Ichihara T."/>
            <person name="Shiohata N."/>
            <person name="Sano S."/>
            <person name="Moriya S."/>
            <person name="Momiyama H."/>
            <person name="Satoh N."/>
            <person name="Takami S."/>
            <person name="Terashima Y."/>
            <person name="Suzuki O."/>
            <person name="Nakagawa S."/>
            <person name="Senoh A."/>
            <person name="Mizoguchi H."/>
            <person name="Goto Y."/>
            <person name="Shimizu F."/>
            <person name="Wakebe H."/>
            <person name="Hishigaki H."/>
            <person name="Watanabe T."/>
            <person name="Sugiyama A."/>
            <person name="Takemoto M."/>
            <person name="Kawakami B."/>
            <person name="Yamazaki M."/>
            <person name="Watanabe K."/>
            <person name="Kumagai A."/>
            <person name="Itakura S."/>
            <person name="Fukuzumi Y."/>
            <person name="Fujimori Y."/>
            <person name="Komiyama M."/>
            <person name="Tashiro H."/>
            <person name="Tanigami A."/>
            <person name="Fujiwara T."/>
            <person name="Ono T."/>
            <person name="Yamada K."/>
            <person name="Fujii Y."/>
            <person name="Ozaki K."/>
            <person name="Hirao M."/>
            <person name="Ohmori Y."/>
            <person name="Kawabata A."/>
            <person name="Hikiji T."/>
            <person name="Kobatake N."/>
            <person name="Inagaki H."/>
            <person name="Ikema Y."/>
            <person name="Okamoto S."/>
            <person name="Okitani R."/>
            <person name="Kawakami T."/>
            <person name="Noguchi S."/>
            <person name="Itoh T."/>
            <person name="Shigeta K."/>
            <person name="Senba T."/>
            <person name="Matsumura K."/>
            <person name="Nakajima Y."/>
            <person name="Mizuno T."/>
            <person name="Morinaga M."/>
            <person name="Sasaki M."/>
            <person name="Togashi T."/>
            <person name="Oyama M."/>
            <person name="Hata H."/>
            <person name="Watanabe M."/>
            <person name="Komatsu T."/>
            <person name="Mizushima-Sugano J."/>
            <person name="Satoh T."/>
            <person name="Shirai Y."/>
            <person name="Takahashi Y."/>
            <person name="Nakagawa K."/>
            <person name="Okumura K."/>
            <person name="Nagase T."/>
            <person name="Nomura N."/>
            <person name="Kikuchi H."/>
            <person name="Masuho Y."/>
            <person name="Yamashita R."/>
            <person name="Nakai K."/>
            <person name="Yada T."/>
            <person name="Nakamura Y."/>
            <person name="Ohara O."/>
            <person name="Isogai T."/>
            <person name="Sugano S."/>
        </authorList>
    </citation>
    <scope>NUCLEOTIDE SEQUENCE [LARGE SCALE MRNA] (ISOFORM 1)</scope>
    <scope>VARIANT ALA-177</scope>
    <source>
        <tissue>Testis</tissue>
    </source>
</reference>
<reference key="5">
    <citation type="journal article" date="2001" name="Nature">
        <title>The DNA sequence and comparative analysis of human chromosome 20.</title>
        <authorList>
            <person name="Deloukas P."/>
            <person name="Matthews L.H."/>
            <person name="Ashurst J.L."/>
            <person name="Burton J."/>
            <person name="Gilbert J.G.R."/>
            <person name="Jones M."/>
            <person name="Stavrides G."/>
            <person name="Almeida J.P."/>
            <person name="Babbage A.K."/>
            <person name="Bagguley C.L."/>
            <person name="Bailey J."/>
            <person name="Barlow K.F."/>
            <person name="Bates K.N."/>
            <person name="Beard L.M."/>
            <person name="Beare D.M."/>
            <person name="Beasley O.P."/>
            <person name="Bird C.P."/>
            <person name="Blakey S.E."/>
            <person name="Bridgeman A.M."/>
            <person name="Brown A.J."/>
            <person name="Buck D."/>
            <person name="Burrill W.D."/>
            <person name="Butler A.P."/>
            <person name="Carder C."/>
            <person name="Carter N.P."/>
            <person name="Chapman J.C."/>
            <person name="Clamp M."/>
            <person name="Clark G."/>
            <person name="Clark L.N."/>
            <person name="Clark S.Y."/>
            <person name="Clee C.M."/>
            <person name="Clegg S."/>
            <person name="Cobley V.E."/>
            <person name="Collier R.E."/>
            <person name="Connor R.E."/>
            <person name="Corby N.R."/>
            <person name="Coulson A."/>
            <person name="Coville G.J."/>
            <person name="Deadman R."/>
            <person name="Dhami P.D."/>
            <person name="Dunn M."/>
            <person name="Ellington A.G."/>
            <person name="Frankland J.A."/>
            <person name="Fraser A."/>
            <person name="French L."/>
            <person name="Garner P."/>
            <person name="Grafham D.V."/>
            <person name="Griffiths C."/>
            <person name="Griffiths M.N.D."/>
            <person name="Gwilliam R."/>
            <person name="Hall R.E."/>
            <person name="Hammond S."/>
            <person name="Harley J.L."/>
            <person name="Heath P.D."/>
            <person name="Ho S."/>
            <person name="Holden J.L."/>
            <person name="Howden P.J."/>
            <person name="Huckle E."/>
            <person name="Hunt A.R."/>
            <person name="Hunt S.E."/>
            <person name="Jekosch K."/>
            <person name="Johnson C.M."/>
            <person name="Johnson D."/>
            <person name="Kay M.P."/>
            <person name="Kimberley A.M."/>
            <person name="King A."/>
            <person name="Knights A."/>
            <person name="Laird G.K."/>
            <person name="Lawlor S."/>
            <person name="Lehvaeslaiho M.H."/>
            <person name="Leversha M.A."/>
            <person name="Lloyd C."/>
            <person name="Lloyd D.M."/>
            <person name="Lovell J.D."/>
            <person name="Marsh V.L."/>
            <person name="Martin S.L."/>
            <person name="McConnachie L.J."/>
            <person name="McLay K."/>
            <person name="McMurray A.A."/>
            <person name="Milne S.A."/>
            <person name="Mistry D."/>
            <person name="Moore M.J.F."/>
            <person name="Mullikin J.C."/>
            <person name="Nickerson T."/>
            <person name="Oliver K."/>
            <person name="Parker A."/>
            <person name="Patel R."/>
            <person name="Pearce T.A.V."/>
            <person name="Peck A.I."/>
            <person name="Phillimore B.J.C.T."/>
            <person name="Prathalingam S.R."/>
            <person name="Plumb R.W."/>
            <person name="Ramsay H."/>
            <person name="Rice C.M."/>
            <person name="Ross M.T."/>
            <person name="Scott C.E."/>
            <person name="Sehra H.K."/>
            <person name="Shownkeen R."/>
            <person name="Sims S."/>
            <person name="Skuce C.D."/>
            <person name="Smith M.L."/>
            <person name="Soderlund C."/>
            <person name="Steward C.A."/>
            <person name="Sulston J.E."/>
            <person name="Swann R.M."/>
            <person name="Sycamore N."/>
            <person name="Taylor R."/>
            <person name="Tee L."/>
            <person name="Thomas D.W."/>
            <person name="Thorpe A."/>
            <person name="Tracey A."/>
            <person name="Tromans A.C."/>
            <person name="Vaudin M."/>
            <person name="Wall M."/>
            <person name="Wallis J.M."/>
            <person name="Whitehead S.L."/>
            <person name="Whittaker P."/>
            <person name="Willey D.L."/>
            <person name="Williams L."/>
            <person name="Williams S.A."/>
            <person name="Wilming L."/>
            <person name="Wray P.W."/>
            <person name="Hubbard T."/>
            <person name="Durbin R.M."/>
            <person name="Bentley D.R."/>
            <person name="Beck S."/>
            <person name="Rogers J."/>
        </authorList>
    </citation>
    <scope>NUCLEOTIDE SEQUENCE [LARGE SCALE GENOMIC DNA]</scope>
</reference>
<reference key="6">
    <citation type="submission" date="2005-09" db="EMBL/GenBank/DDBJ databases">
        <authorList>
            <person name="Mural R.J."/>
            <person name="Istrail S."/>
            <person name="Sutton G."/>
            <person name="Florea L."/>
            <person name="Halpern A.L."/>
            <person name="Mobarry C.M."/>
            <person name="Lippert R."/>
            <person name="Walenz B."/>
            <person name="Shatkay H."/>
            <person name="Dew I."/>
            <person name="Miller J.R."/>
            <person name="Flanigan M.J."/>
            <person name="Edwards N.J."/>
            <person name="Bolanos R."/>
            <person name="Fasulo D."/>
            <person name="Halldorsson B.V."/>
            <person name="Hannenhalli S."/>
            <person name="Turner R."/>
            <person name="Yooseph S."/>
            <person name="Lu F."/>
            <person name="Nusskern D.R."/>
            <person name="Shue B.C."/>
            <person name="Zheng X.H."/>
            <person name="Zhong F."/>
            <person name="Delcher A.L."/>
            <person name="Huson D.H."/>
            <person name="Kravitz S.A."/>
            <person name="Mouchard L."/>
            <person name="Reinert K."/>
            <person name="Remington K.A."/>
            <person name="Clark A.G."/>
            <person name="Waterman M.S."/>
            <person name="Eichler E.E."/>
            <person name="Adams M.D."/>
            <person name="Hunkapiller M.W."/>
            <person name="Myers E.W."/>
            <person name="Venter J.C."/>
        </authorList>
    </citation>
    <scope>NUCLEOTIDE SEQUENCE [LARGE SCALE GENOMIC DNA]</scope>
</reference>
<reference key="7">
    <citation type="journal article" date="2004" name="Genome Res.">
        <title>The status, quality, and expansion of the NIH full-length cDNA project: the Mammalian Gene Collection (MGC).</title>
        <authorList>
            <consortium name="The MGC Project Team"/>
        </authorList>
    </citation>
    <scope>NUCLEOTIDE SEQUENCE [LARGE SCALE MRNA] (ISOFORM 1)</scope>
    <scope>VARIANT ALA-177</scope>
</reference>
<reference key="8">
    <citation type="journal article" date="2002" name="Semin. Cancer Biol.">
        <title>The novel BORIS + CTCF gene family is uniquely involved in the epigenetics of normal biology and cancer.</title>
        <authorList>
            <person name="Klenova E.M."/>
            <person name="Morse H.C. III"/>
            <person name="Ohlsson R."/>
            <person name="Lobanenkov V.V."/>
        </authorList>
    </citation>
    <scope>REVIEW</scope>
</reference>
<reference key="9">
    <citation type="journal article" date="2008" name="Cancer Res.">
        <title>DNA methyltransferase 1 and 3B activate BAG-1 expression via recruitment of CTCFL/BORIS and modulation of promoter histone methylation.</title>
        <authorList>
            <person name="Sun L."/>
            <person name="Huang L."/>
            <person name="Nguyen P."/>
            <person name="Bisht K.S."/>
            <person name="Bar-Sela G."/>
            <person name="Ho A.S."/>
            <person name="Bradbury C.M."/>
            <person name="Yu W."/>
            <person name="Cui H."/>
            <person name="Lee S."/>
            <person name="Trepel J.B."/>
            <person name="Feinberg A.P."/>
            <person name="Gius D."/>
        </authorList>
    </citation>
    <scope>FUNCTION</scope>
</reference>
<reference key="10">
    <citation type="journal article" date="2008" name="Mol. Cell. Biol.">
        <title>BAT3 and SET1A form a complex with CTCFL/BORIS to modulate H3K4 histone dimethylation and gene expression.</title>
        <authorList>
            <person name="Nguyen P."/>
            <person name="Bar-Sela G."/>
            <person name="Sun L."/>
            <person name="Bisht K.S."/>
            <person name="Cui H."/>
            <person name="Kohn E."/>
            <person name="Feinberg A.P."/>
            <person name="Gius D."/>
        </authorList>
    </citation>
    <scope>FUNCTION</scope>
    <scope>INTERACTION WITH BAG6/BAT3 AND SETD1A</scope>
</reference>
<gene>
    <name type="primary">CTCFL</name>
    <name type="synonym">BORIS</name>
</gene>
<name>CTCFL_HUMAN</name>
<organism>
    <name type="scientific">Homo sapiens</name>
    <name type="common">Human</name>
    <dbReference type="NCBI Taxonomy" id="9606"/>
    <lineage>
        <taxon>Eukaryota</taxon>
        <taxon>Metazoa</taxon>
        <taxon>Chordata</taxon>
        <taxon>Craniata</taxon>
        <taxon>Vertebrata</taxon>
        <taxon>Euteleostomi</taxon>
        <taxon>Mammalia</taxon>
        <taxon>Eutheria</taxon>
        <taxon>Euarchontoglires</taxon>
        <taxon>Primates</taxon>
        <taxon>Haplorrhini</taxon>
        <taxon>Catarrhini</taxon>
        <taxon>Hominidae</taxon>
        <taxon>Homo</taxon>
    </lineage>
</organism>
<keyword id="KW-0010">Activator</keyword>
<keyword id="KW-0025">Alternative splicing</keyword>
<keyword id="KW-0131">Cell cycle</keyword>
<keyword id="KW-0156">Chromatin regulator</keyword>
<keyword id="KW-0963">Cytoplasm</keyword>
<keyword id="KW-0238">DNA-binding</keyword>
<keyword id="KW-0479">Metal-binding</keyword>
<keyword id="KW-0539">Nucleus</keyword>
<keyword id="KW-1267">Proteomics identification</keyword>
<keyword id="KW-1185">Reference proteome</keyword>
<keyword id="KW-0677">Repeat</keyword>
<keyword id="KW-0678">Repressor</keyword>
<keyword id="KW-0804">Transcription</keyword>
<keyword id="KW-0805">Transcription regulation</keyword>
<keyword id="KW-0862">Zinc</keyword>
<keyword id="KW-0863">Zinc-finger</keyword>
<comment type="function">
    <text evidence="1 4 8 9">Testis-specific DNA binding protein responsible for insulator function, nuclear architecture and transcriptional control, which probably acts by recruiting epigenetic chromatin modifiers. Plays a key role in gene imprinting in male germline, by participating in the establishment of differential methylation at the IGF2/H19 imprinted control region (ICR). Directly binds the unmethylated H19 ICR and recruits the PRMT7 methyltransferase, leading to methylate histone H4 'Arg-3' to form H4R3sme2. This probably leads to recruit de novo DNA methyltransferases at these sites (By similarity). Seems to act as tumor suppressor. In association with DNMT1 and DNMT3B, involved in activation of BAG1 gene expression by binding to its promoter. Required for dimethylation of H3 lysine 4 (H3K4me2) of MYC and BRCA1 promoters.</text>
</comment>
<comment type="subunit">
    <text evidence="9">Interacts with histones, PRMT7 and SETD1A. Interacts (via N-terminus) with BAG6/BAT3.</text>
</comment>
<comment type="subcellular location">
    <subcellularLocation>
        <location>Cytoplasm</location>
    </subcellularLocation>
    <subcellularLocation>
        <location>Nucleus</location>
    </subcellularLocation>
</comment>
<comment type="alternative products">
    <event type="alternative splicing"/>
    <isoform>
        <id>Q8NI51-1</id>
        <name>1</name>
        <sequence type="displayed"/>
    </isoform>
    <isoform>
        <id>Q8NI51-2</id>
        <name>2</name>
        <sequence type="described" ref="VSP_045158"/>
    </isoform>
    <isoform>
        <id>Q8NI51-3</id>
        <name>3</name>
        <sequence type="described" ref="VSP_045160"/>
    </isoform>
    <isoform>
        <id>Q8NI51-4</id>
        <name>4</name>
        <sequence type="described" ref="VSP_045157 VSP_045159"/>
    </isoform>
    <isoform>
        <id>Q8NI51-5</id>
        <name>5</name>
        <sequence type="described" ref="VSP_045156 VSP_045159"/>
    </isoform>
    <isoform>
        <id>Q8NI51-6</id>
        <name>6</name>
        <sequence type="described" ref="VSP_045155 VSP_045160"/>
    </isoform>
    <isoform>
        <id>Q8NI51-7</id>
        <name>7</name>
        <sequence type="described" ref="VSP_047059"/>
    </isoform>
    <isoform>
        <id>Q8NI51-8</id>
        <name>8</name>
        <sequence type="described" ref="VSP_047058"/>
    </isoform>
    <isoform>
        <id>Q8NI51-9</id>
        <name>9</name>
        <sequence type="described" ref="VSP_047725 VSP_047726"/>
    </isoform>
    <isoform>
        <id>Q8NI51-10</id>
        <name>10</name>
        <sequence type="described" ref="VSP_045156 VSP_045160"/>
    </isoform>
    <isoform>
        <id>Q8NI51-11</id>
        <name>11</name>
        <sequence type="described" ref="VSP_045155 VSP_054899"/>
    </isoform>
</comment>
<comment type="tissue specificity">
    <text>Testis specific. Specifically expressed in primary spermatocytes.</text>
</comment>
<comment type="developmental stage">
    <text>Is up-regulated in primary spermatocytes (expression overlapping with the genome-wide erasure of methylation) to become silenced on activation of CTCF in post-meiotic germline cells (expression corresponding to DNA remethylation).</text>
</comment>
<comment type="similarity">
    <text evidence="11">Belongs to the CTCF zinc-finger protein family.</text>
</comment>
<feature type="chain" id="PRO_0000047226" description="Transcriptional repressor CTCFL">
    <location>
        <begin position="1"/>
        <end position="663"/>
    </location>
</feature>
<feature type="zinc finger region" description="C2H2-type 1" evidence="2">
    <location>
        <begin position="257"/>
        <end position="279"/>
    </location>
</feature>
<feature type="zinc finger region" description="C2H2-type 2" evidence="2">
    <location>
        <begin position="285"/>
        <end position="307"/>
    </location>
</feature>
<feature type="zinc finger region" description="C2H2-type 3" evidence="2">
    <location>
        <begin position="313"/>
        <end position="336"/>
    </location>
</feature>
<feature type="zinc finger region" description="C2H2-type 4" evidence="2">
    <location>
        <begin position="342"/>
        <end position="364"/>
    </location>
</feature>
<feature type="zinc finger region" description="C2H2-type 5" evidence="2">
    <location>
        <begin position="370"/>
        <end position="392"/>
    </location>
</feature>
<feature type="zinc finger region" description="C2H2-type 6" evidence="2">
    <location>
        <begin position="398"/>
        <end position="421"/>
    </location>
</feature>
<feature type="zinc finger region" description="C2H2-type 7" evidence="2">
    <location>
        <begin position="428"/>
        <end position="451"/>
    </location>
</feature>
<feature type="zinc finger region" description="C2H2-type 8" evidence="2">
    <location>
        <begin position="458"/>
        <end position="480"/>
    </location>
</feature>
<feature type="zinc finger region" description="C2H2-type 9" evidence="2">
    <location>
        <begin position="486"/>
        <end position="508"/>
    </location>
</feature>
<feature type="zinc finger region" description="C2H2-type 10" evidence="2">
    <location>
        <begin position="514"/>
        <end position="537"/>
    </location>
</feature>
<feature type="zinc finger region" description="C2H2-type 11; atypical" evidence="2">
    <location>
        <begin position="546"/>
        <end position="568"/>
    </location>
</feature>
<feature type="region of interest" description="Disordered" evidence="3">
    <location>
        <begin position="24"/>
        <end position="55"/>
    </location>
</feature>
<feature type="region of interest" description="Disordered" evidence="3">
    <location>
        <begin position="221"/>
        <end position="250"/>
    </location>
</feature>
<feature type="region of interest" description="Disordered" evidence="3">
    <location>
        <begin position="569"/>
        <end position="630"/>
    </location>
</feature>
<feature type="compositionally biased region" description="Basic and acidic residues" evidence="3">
    <location>
        <begin position="24"/>
        <end position="51"/>
    </location>
</feature>
<feature type="compositionally biased region" description="Basic residues" evidence="3">
    <location>
        <begin position="580"/>
        <end position="590"/>
    </location>
</feature>
<feature type="compositionally biased region" description="Basic and acidic residues" evidence="3">
    <location>
        <begin position="594"/>
        <end position="607"/>
    </location>
</feature>
<feature type="compositionally biased region" description="Low complexity" evidence="3">
    <location>
        <begin position="608"/>
        <end position="620"/>
    </location>
</feature>
<feature type="splice variant" id="VSP_045155" description="In isoform 6 and isoform 11." evidence="10">
    <location>
        <begin position="1"/>
        <end position="262"/>
    </location>
</feature>
<feature type="splice variant" id="VSP_045156" description="In isoform 5 and isoform 10." evidence="10">
    <location>
        <begin position="1"/>
        <end position="205"/>
    </location>
</feature>
<feature type="splice variant" id="VSP_045157" description="In isoform 4." evidence="10">
    <location>
        <begin position="354"/>
        <end position="497"/>
    </location>
</feature>
<feature type="splice variant" id="VSP_047725" description="In isoform 9." evidence="10">
    <original>GEKPYECHICHTRFTQSGTMKIHILQKHGENVPK</original>
    <variation>EATSKRSLQEIPRCKFHPDCLQMLQVWQRLFPLD</variation>
    <location>
        <begin position="394"/>
        <end position="427"/>
    </location>
</feature>
<feature type="splice variant" id="VSP_047058" description="In isoform 8." evidence="10">
    <location>
        <begin position="395"/>
        <end position="444"/>
    </location>
</feature>
<feature type="splice variant" id="VSP_047726" description="In isoform 9." evidence="10">
    <location>
        <begin position="428"/>
        <end position="663"/>
    </location>
</feature>
<feature type="splice variant" id="VSP_054899" description="In isoform 11." evidence="10">
    <original>INLHRHSEKCGSGEAKSAASGKGRRTRKRKQTILKEATKGQKEAAKGWKEAANGDEAAAEEASTTKGEQFPGEMFPVACRETTARVKEEVDEGVTCEMLLNTMDK</original>
    <variation>VLY</variation>
    <location>
        <begin position="559"/>
        <end position="663"/>
    </location>
</feature>
<feature type="splice variant" id="VSP_045158" description="In isoform 2." evidence="10">
    <original>NLHRHSEKCGSGEAKSAASGKGRRTRKRKQTILKEATKGQKEAAKGWKEAANGDEAAAEEASTTKGEQFPGEMFPVACRETTARVKEEVDEGVTCEMLLNTMDK</original>
    <variation>TSKWSGLKPQTFIT</variation>
    <location>
        <begin position="560"/>
        <end position="663"/>
    </location>
</feature>
<feature type="splice variant" id="VSP_045159" description="In isoform 4 and isoform 5." evidence="10">
    <original>NLHRHSEKCGSGEAKSAASGKGRRTRKRKQTILKEATKGQKEAAKGWKEAANGDEAAAEEASTTKGEQFPGEMFPVACRETTARVKEEVDEGVTCEMLLNTMDK</original>
    <variation>LWVGNSEVAELGGPGSGPLLRLQSGCPPGLHHPKAGLGPEDPLPGQLRHTTAGTGLSSLLQGPLCRAA</variation>
    <location>
        <begin position="560"/>
        <end position="663"/>
    </location>
</feature>
<feature type="splice variant" id="VSP_045160" description="In isoform 3, isoform 6 and isoform 10." evidence="10">
    <original>EAAAEEASTTKGEQFPGEMFPVACRETTARVKEEVDEGVTCEMLLNTMDK</original>
    <variation>GVISAHRNLCLLGSSDSHASVSGAGITDARHHAWLIVLLFLVEMGFYHVSHS</variation>
    <location>
        <begin position="614"/>
        <end position="663"/>
    </location>
</feature>
<feature type="splice variant" id="VSP_047059" description="In isoform 7." evidence="10">
    <original>K</original>
    <variation>NSAGCTGRMMLVSAWLLGRPQETYNQGRRRRGSRRVTW</variation>
    <location>
        <position position="663"/>
    </location>
</feature>
<feature type="sequence variant" id="VAR_023213" description="In dbSNP:rs6070128.">
    <original>E</original>
    <variation>Q</variation>
    <location>
        <position position="50"/>
    </location>
</feature>
<feature type="sequence variant" id="VAR_023214" description="In dbSNP:rs6025606." evidence="4 5 6 7">
    <original>T</original>
    <variation>A</variation>
    <location>
        <position position="177"/>
    </location>
</feature>
<feature type="sequence variant" id="VAR_057374" description="In dbSNP:rs6092491.">
    <original>R</original>
    <variation>H</variation>
    <location>
        <position position="448"/>
    </location>
</feature>
<feature type="sequence variant" id="VAR_032766" description="In dbSNP:rs6070122.">
    <original>Q</original>
    <variation>E</variation>
    <location>
        <position position="525"/>
    </location>
</feature>
<feature type="sequence conflict" description="In Ref. 2; AAL61541." evidence="11" ref="2">
    <location>
        <position position="613"/>
    </location>
</feature>